<feature type="chain" id="PRO_0000145151" description="DNA topoisomerase 1">
    <location>
        <begin position="1"/>
        <end position="736"/>
    </location>
</feature>
<feature type="domain" description="Toprim" evidence="1">
    <location>
        <begin position="2"/>
        <end position="113"/>
    </location>
</feature>
<feature type="domain" description="Topo IA-type catalytic" evidence="2">
    <location>
        <begin position="129"/>
        <end position="552"/>
    </location>
</feature>
<feature type="zinc finger region" description="C4-type 1">
    <location>
        <begin position="572"/>
        <end position="598"/>
    </location>
</feature>
<feature type="zinc finger region" description="C4-type 2">
    <location>
        <begin position="616"/>
        <end position="642"/>
    </location>
</feature>
<feature type="zinc finger region" description="C4-type 3">
    <location>
        <begin position="663"/>
        <end position="689"/>
    </location>
</feature>
<feature type="zinc finger region" description="C4-type 4">
    <location>
        <begin position="702"/>
        <end position="725"/>
    </location>
</feature>
<feature type="region of interest" description="Interaction with DNA" evidence="1">
    <location>
        <begin position="163"/>
        <end position="168"/>
    </location>
</feature>
<feature type="active site" description="O-(5'-phospho-DNA)-tyrosine intermediate" evidence="2">
    <location>
        <position position="297"/>
    </location>
</feature>
<feature type="binding site" evidence="1">
    <location>
        <position position="8"/>
    </location>
    <ligand>
        <name>Mg(2+)</name>
        <dbReference type="ChEBI" id="CHEBI:18420"/>
        <note>catalytic</note>
    </ligand>
</feature>
<feature type="binding site" evidence="1">
    <location>
        <position position="82"/>
    </location>
    <ligand>
        <name>Mg(2+)</name>
        <dbReference type="ChEBI" id="CHEBI:18420"/>
        <note>catalytic</note>
    </ligand>
</feature>
<feature type="site" description="Interaction with DNA" evidence="1">
    <location>
        <position position="32"/>
    </location>
</feature>
<feature type="site" description="Interaction with DNA" evidence="1">
    <location>
        <position position="139"/>
    </location>
</feature>
<feature type="site" description="Interaction with DNA" evidence="1">
    <location>
        <position position="140"/>
    </location>
</feature>
<feature type="site" description="Interaction with DNA" evidence="1">
    <location>
        <position position="143"/>
    </location>
</feature>
<feature type="site" description="Interaction with DNA" evidence="1">
    <location>
        <position position="299"/>
    </location>
</feature>
<feature type="site" description="Interaction with DNA" evidence="1">
    <location>
        <position position="484"/>
    </location>
</feature>
<accession>Q9ZMV7</accession>
<comment type="function">
    <text evidence="1">Releases the supercoiling and torsional tension of DNA, which is introduced during the DNA replication and transcription, by transiently cleaving and rejoining one strand of the DNA duplex. Introduces a single-strand break via transesterification at a target site in duplex DNA. The scissile phosphodiester is attacked by the catalytic tyrosine of the enzyme, resulting in the formation of a DNA-(5'-phosphotyrosyl)-enzyme intermediate and the expulsion of a 3'-OH DNA strand. The free DNA strand then undergoes passage around the unbroken strand, thus removing DNA supercoils. Finally, in the religation step, the DNA 3'-OH attacks the covalent intermediate to expel the active-site tyrosine and restore the DNA phosphodiester backbone.</text>
</comment>
<comment type="catalytic activity">
    <reaction evidence="1">
        <text>ATP-independent breakage of single-stranded DNA, followed by passage and rejoining.</text>
        <dbReference type="EC" id="5.6.2.1"/>
    </reaction>
</comment>
<comment type="cofactor">
    <cofactor evidence="1">
        <name>Mg(2+)</name>
        <dbReference type="ChEBI" id="CHEBI:18420"/>
    </cofactor>
</comment>
<comment type="subunit">
    <text evidence="1">Monomer.</text>
</comment>
<comment type="similarity">
    <text evidence="1">Belongs to the type IA topoisomerase family.</text>
</comment>
<evidence type="ECO:0000255" key="1">
    <source>
        <dbReference type="HAMAP-Rule" id="MF_00952"/>
    </source>
</evidence>
<evidence type="ECO:0000255" key="2">
    <source>
        <dbReference type="PROSITE-ProRule" id="PRU01383"/>
    </source>
</evidence>
<name>TOP1_HELPJ</name>
<protein>
    <recommendedName>
        <fullName evidence="1">DNA topoisomerase 1</fullName>
        <ecNumber evidence="1">5.6.2.1</ecNumber>
    </recommendedName>
    <alternativeName>
        <fullName evidence="1">DNA topoisomerase I</fullName>
    </alternativeName>
    <alternativeName>
        <fullName>Omega-protein</fullName>
    </alternativeName>
    <alternativeName>
        <fullName>Relaxing enzyme</fullName>
    </alternativeName>
    <alternativeName>
        <fullName>Swivelase</fullName>
    </alternativeName>
    <alternativeName>
        <fullName>Untwisting enzyme</fullName>
    </alternativeName>
</protein>
<dbReference type="EC" id="5.6.2.1" evidence="1"/>
<dbReference type="EMBL" id="AE001439">
    <property type="protein sequence ID" value="AAD05695.1"/>
    <property type="molecule type" value="Genomic_DNA"/>
</dbReference>
<dbReference type="PIR" id="B71972">
    <property type="entry name" value="B71972"/>
</dbReference>
<dbReference type="RefSeq" id="WP_000681518.1">
    <property type="nucleotide sequence ID" value="NC_000921.1"/>
</dbReference>
<dbReference type="SMR" id="Q9ZMV7"/>
<dbReference type="KEGG" id="hpj:jhp_0108"/>
<dbReference type="eggNOG" id="COG0550">
    <property type="taxonomic scope" value="Bacteria"/>
</dbReference>
<dbReference type="eggNOG" id="COG0551">
    <property type="taxonomic scope" value="Bacteria"/>
</dbReference>
<dbReference type="Proteomes" id="UP000000804">
    <property type="component" value="Chromosome"/>
</dbReference>
<dbReference type="GO" id="GO:0005694">
    <property type="term" value="C:chromosome"/>
    <property type="evidence" value="ECO:0007669"/>
    <property type="project" value="InterPro"/>
</dbReference>
<dbReference type="GO" id="GO:0003677">
    <property type="term" value="F:DNA binding"/>
    <property type="evidence" value="ECO:0007669"/>
    <property type="project" value="UniProtKB-KW"/>
</dbReference>
<dbReference type="GO" id="GO:0003917">
    <property type="term" value="F:DNA topoisomerase type I (single strand cut, ATP-independent) activity"/>
    <property type="evidence" value="ECO:0007669"/>
    <property type="project" value="UniProtKB-UniRule"/>
</dbReference>
<dbReference type="GO" id="GO:0008270">
    <property type="term" value="F:zinc ion binding"/>
    <property type="evidence" value="ECO:0007669"/>
    <property type="project" value="UniProtKB-KW"/>
</dbReference>
<dbReference type="GO" id="GO:0006265">
    <property type="term" value="P:DNA topological change"/>
    <property type="evidence" value="ECO:0007669"/>
    <property type="project" value="UniProtKB-UniRule"/>
</dbReference>
<dbReference type="CDD" id="cd00186">
    <property type="entry name" value="TOP1Ac"/>
    <property type="match status" value="1"/>
</dbReference>
<dbReference type="CDD" id="cd03363">
    <property type="entry name" value="TOPRIM_TopoIA_TopoI"/>
    <property type="match status" value="1"/>
</dbReference>
<dbReference type="Gene3D" id="3.40.50.140">
    <property type="match status" value="1"/>
</dbReference>
<dbReference type="Gene3D" id="3.30.65.10">
    <property type="entry name" value="Bacterial Topoisomerase I, domain 1"/>
    <property type="match status" value="3"/>
</dbReference>
<dbReference type="Gene3D" id="1.10.460.10">
    <property type="entry name" value="Topoisomerase I, domain 2"/>
    <property type="match status" value="1"/>
</dbReference>
<dbReference type="Gene3D" id="2.70.20.10">
    <property type="entry name" value="Topoisomerase I, domain 3"/>
    <property type="match status" value="1"/>
</dbReference>
<dbReference type="Gene3D" id="1.10.290.10">
    <property type="entry name" value="Topoisomerase I, domain 4"/>
    <property type="match status" value="1"/>
</dbReference>
<dbReference type="HAMAP" id="MF_00952">
    <property type="entry name" value="Topoisom_1_prok"/>
    <property type="match status" value="1"/>
</dbReference>
<dbReference type="InterPro" id="IPR000380">
    <property type="entry name" value="Topo_IA"/>
</dbReference>
<dbReference type="InterPro" id="IPR003601">
    <property type="entry name" value="Topo_IA_2"/>
</dbReference>
<dbReference type="InterPro" id="IPR023406">
    <property type="entry name" value="Topo_IA_AS"/>
</dbReference>
<dbReference type="InterPro" id="IPR013497">
    <property type="entry name" value="Topo_IA_cen"/>
</dbReference>
<dbReference type="InterPro" id="IPR013824">
    <property type="entry name" value="Topo_IA_cen_sub1"/>
</dbReference>
<dbReference type="InterPro" id="IPR013825">
    <property type="entry name" value="Topo_IA_cen_sub2"/>
</dbReference>
<dbReference type="InterPro" id="IPR013826">
    <property type="entry name" value="Topo_IA_cen_sub3"/>
</dbReference>
<dbReference type="InterPro" id="IPR023405">
    <property type="entry name" value="Topo_IA_core_domain"/>
</dbReference>
<dbReference type="InterPro" id="IPR003602">
    <property type="entry name" value="Topo_IA_DNA-bd_dom"/>
</dbReference>
<dbReference type="InterPro" id="IPR013498">
    <property type="entry name" value="Topo_IA_Znf"/>
</dbReference>
<dbReference type="InterPro" id="IPR005733">
    <property type="entry name" value="TopoI_bac-type"/>
</dbReference>
<dbReference type="InterPro" id="IPR028612">
    <property type="entry name" value="Topoisom_1_IA"/>
</dbReference>
<dbReference type="InterPro" id="IPR006171">
    <property type="entry name" value="TOPRIM_dom"/>
</dbReference>
<dbReference type="InterPro" id="IPR034149">
    <property type="entry name" value="TOPRIM_TopoI"/>
</dbReference>
<dbReference type="NCBIfam" id="TIGR01051">
    <property type="entry name" value="topA_bact"/>
    <property type="match status" value="1"/>
</dbReference>
<dbReference type="PANTHER" id="PTHR42785:SF1">
    <property type="entry name" value="DNA TOPOISOMERASE"/>
    <property type="match status" value="1"/>
</dbReference>
<dbReference type="PANTHER" id="PTHR42785">
    <property type="entry name" value="DNA TOPOISOMERASE, TYPE IA, CORE"/>
    <property type="match status" value="1"/>
</dbReference>
<dbReference type="Pfam" id="PF01131">
    <property type="entry name" value="Topoisom_bac"/>
    <property type="match status" value="1"/>
</dbReference>
<dbReference type="Pfam" id="PF01751">
    <property type="entry name" value="Toprim"/>
    <property type="match status" value="1"/>
</dbReference>
<dbReference type="Pfam" id="PF01396">
    <property type="entry name" value="Zn_ribbon_Top1"/>
    <property type="match status" value="3"/>
</dbReference>
<dbReference type="PRINTS" id="PR00417">
    <property type="entry name" value="PRTPISMRASEI"/>
</dbReference>
<dbReference type="SMART" id="SM00437">
    <property type="entry name" value="TOP1Ac"/>
    <property type="match status" value="1"/>
</dbReference>
<dbReference type="SMART" id="SM00436">
    <property type="entry name" value="TOP1Bc"/>
    <property type="match status" value="1"/>
</dbReference>
<dbReference type="SMART" id="SM00493">
    <property type="entry name" value="TOPRIM"/>
    <property type="match status" value="1"/>
</dbReference>
<dbReference type="SUPFAM" id="SSF56712">
    <property type="entry name" value="Prokaryotic type I DNA topoisomerase"/>
    <property type="match status" value="1"/>
</dbReference>
<dbReference type="SUPFAM" id="SSF57783">
    <property type="entry name" value="Zinc beta-ribbon"/>
    <property type="match status" value="3"/>
</dbReference>
<dbReference type="PROSITE" id="PS00396">
    <property type="entry name" value="TOPO_IA_1"/>
    <property type="match status" value="1"/>
</dbReference>
<dbReference type="PROSITE" id="PS52039">
    <property type="entry name" value="TOPO_IA_2"/>
    <property type="match status" value="1"/>
</dbReference>
<dbReference type="PROSITE" id="PS50880">
    <property type="entry name" value="TOPRIM"/>
    <property type="match status" value="1"/>
</dbReference>
<proteinExistence type="inferred from homology"/>
<organism>
    <name type="scientific">Helicobacter pylori (strain J99 / ATCC 700824)</name>
    <name type="common">Campylobacter pylori J99</name>
    <dbReference type="NCBI Taxonomy" id="85963"/>
    <lineage>
        <taxon>Bacteria</taxon>
        <taxon>Pseudomonadati</taxon>
        <taxon>Campylobacterota</taxon>
        <taxon>Epsilonproteobacteria</taxon>
        <taxon>Campylobacterales</taxon>
        <taxon>Helicobacteraceae</taxon>
        <taxon>Helicobacter</taxon>
    </lineage>
</organism>
<sequence length="736" mass="83263">MKHLIIVESPAKAKTIKNFLDKNYEVVASKGHVRDLSKFALGIKIDETGFTPNYVVDKDHKELVKQIIELSKKASITYIATDEDREGEAIGYHVACLIGGKLESYPRIVFHEITQNAILNVLKTPRKIDMFKVNAQQARRLLDRIVGFKLSSLIASKITKGLSAGRVQSAALKLVIDREKEIRPFKPLTYFTLDALFEPHLEAQLISYKGNKLKAQELIDEKKAQEIKNELEKESYIISSIIKKSKKSPTPPPFMTSTLQQSASSLLGFSPTKTMSIAQKLYEGVATPQGVMGVITYMRTDSLNIAKEALEEARAKILKDYGKDYLPPKAKVYSSKNKNAQEAHEAIRPTSIILEPNALKDYLKPEELKLYTLIYKRFLASQMQDALFESQSVVVACEKGEFKASGRKLLFDGHYKILGNDDKDKLLPNLKENDPIKLEKLESNAHVTEPPARYSEASLIKVLESLGIGRPSTYAPTISLLQNRDYIKVEKKQISALESAFKVIEILEKHFEEIVDSKFSASLEEELDNIAQNKADYQQVLKDFYYPFMDKIEAGKKNIISQKVHEKTGQSCPKCGGELVKKNSRYGEFIACNNYPKCKYIKQTENANDEAKQELCEKCGGEMVQKFSRNGAFLACNNYPECKNTKSLKNTPNAKETIEGVKCPECGGDIALKRSKKGSFYGCNNYPKCNFLSNHKPINKRCEKCHYLMSERIYRKKKAHECIQCKERVFLEEDNG</sequence>
<reference key="1">
    <citation type="journal article" date="1999" name="Nature">
        <title>Genomic sequence comparison of two unrelated isolates of the human gastric pathogen Helicobacter pylori.</title>
        <authorList>
            <person name="Alm R.A."/>
            <person name="Ling L.-S.L."/>
            <person name="Moir D.T."/>
            <person name="King B.L."/>
            <person name="Brown E.D."/>
            <person name="Doig P.C."/>
            <person name="Smith D.R."/>
            <person name="Noonan B."/>
            <person name="Guild B.C."/>
            <person name="deJonge B.L."/>
            <person name="Carmel G."/>
            <person name="Tummino P.J."/>
            <person name="Caruso A."/>
            <person name="Uria-Nickelsen M."/>
            <person name="Mills D.M."/>
            <person name="Ives C."/>
            <person name="Gibson R."/>
            <person name="Merberg D."/>
            <person name="Mills S.D."/>
            <person name="Jiang Q."/>
            <person name="Taylor D.E."/>
            <person name="Vovis G.F."/>
            <person name="Trust T.J."/>
        </authorList>
    </citation>
    <scope>NUCLEOTIDE SEQUENCE [LARGE SCALE GENOMIC DNA]</scope>
    <source>
        <strain>J99 / ATCC 700824</strain>
    </source>
</reference>
<gene>
    <name evidence="1" type="primary">topA</name>
    <name type="ordered locus">jhp_0108</name>
</gene>
<keyword id="KW-0238">DNA-binding</keyword>
<keyword id="KW-0413">Isomerase</keyword>
<keyword id="KW-0460">Magnesium</keyword>
<keyword id="KW-0479">Metal-binding</keyword>
<keyword id="KW-0677">Repeat</keyword>
<keyword id="KW-0799">Topoisomerase</keyword>
<keyword id="KW-0862">Zinc</keyword>
<keyword id="KW-0863">Zinc-finger</keyword>